<name>SSRP_CHLTE</name>
<dbReference type="EMBL" id="AE006470">
    <property type="protein sequence ID" value="AAM71806.1"/>
    <property type="molecule type" value="Genomic_DNA"/>
</dbReference>
<dbReference type="RefSeq" id="NP_661464.1">
    <property type="nucleotide sequence ID" value="NC_002932.3"/>
</dbReference>
<dbReference type="RefSeq" id="WP_010932251.1">
    <property type="nucleotide sequence ID" value="NC_002932.3"/>
</dbReference>
<dbReference type="SMR" id="Q8KEW8"/>
<dbReference type="STRING" id="194439.CT0564"/>
<dbReference type="EnsemblBacteria" id="AAM71806">
    <property type="protein sequence ID" value="AAM71806"/>
    <property type="gene ID" value="CT0564"/>
</dbReference>
<dbReference type="KEGG" id="cte:CT0564"/>
<dbReference type="PATRIC" id="fig|194439.7.peg.528"/>
<dbReference type="eggNOG" id="COG0691">
    <property type="taxonomic scope" value="Bacteria"/>
</dbReference>
<dbReference type="HOGENOM" id="CLU_108953_0_1_10"/>
<dbReference type="OrthoDB" id="9805462at2"/>
<dbReference type="Proteomes" id="UP000001007">
    <property type="component" value="Chromosome"/>
</dbReference>
<dbReference type="GO" id="GO:0005829">
    <property type="term" value="C:cytosol"/>
    <property type="evidence" value="ECO:0007669"/>
    <property type="project" value="TreeGrafter"/>
</dbReference>
<dbReference type="GO" id="GO:0003723">
    <property type="term" value="F:RNA binding"/>
    <property type="evidence" value="ECO:0007669"/>
    <property type="project" value="UniProtKB-UniRule"/>
</dbReference>
<dbReference type="GO" id="GO:0070929">
    <property type="term" value="P:trans-translation"/>
    <property type="evidence" value="ECO:0007669"/>
    <property type="project" value="UniProtKB-UniRule"/>
</dbReference>
<dbReference type="CDD" id="cd09294">
    <property type="entry name" value="SmpB"/>
    <property type="match status" value="1"/>
</dbReference>
<dbReference type="Gene3D" id="2.40.280.10">
    <property type="match status" value="1"/>
</dbReference>
<dbReference type="HAMAP" id="MF_00023">
    <property type="entry name" value="SmpB"/>
    <property type="match status" value="1"/>
</dbReference>
<dbReference type="InterPro" id="IPR023620">
    <property type="entry name" value="SmpB"/>
</dbReference>
<dbReference type="InterPro" id="IPR000037">
    <property type="entry name" value="SsrA-bd_prot"/>
</dbReference>
<dbReference type="InterPro" id="IPR020081">
    <property type="entry name" value="SsrA-bd_prot_CS"/>
</dbReference>
<dbReference type="NCBIfam" id="NF003843">
    <property type="entry name" value="PRK05422.1"/>
    <property type="match status" value="1"/>
</dbReference>
<dbReference type="NCBIfam" id="TIGR00086">
    <property type="entry name" value="smpB"/>
    <property type="match status" value="1"/>
</dbReference>
<dbReference type="PANTHER" id="PTHR30308:SF2">
    <property type="entry name" value="SSRA-BINDING PROTEIN"/>
    <property type="match status" value="1"/>
</dbReference>
<dbReference type="PANTHER" id="PTHR30308">
    <property type="entry name" value="TMRNA-BINDING COMPONENT OF TRANS-TRANSLATION TAGGING COMPLEX"/>
    <property type="match status" value="1"/>
</dbReference>
<dbReference type="Pfam" id="PF01668">
    <property type="entry name" value="SmpB"/>
    <property type="match status" value="1"/>
</dbReference>
<dbReference type="SUPFAM" id="SSF74982">
    <property type="entry name" value="Small protein B (SmpB)"/>
    <property type="match status" value="1"/>
</dbReference>
<dbReference type="PROSITE" id="PS01317">
    <property type="entry name" value="SSRP"/>
    <property type="match status" value="1"/>
</dbReference>
<organism>
    <name type="scientific">Chlorobaculum tepidum (strain ATCC 49652 / DSM 12025 / NBRC 103806 / TLS)</name>
    <name type="common">Chlorobium tepidum</name>
    <dbReference type="NCBI Taxonomy" id="194439"/>
    <lineage>
        <taxon>Bacteria</taxon>
        <taxon>Pseudomonadati</taxon>
        <taxon>Chlorobiota</taxon>
        <taxon>Chlorobiia</taxon>
        <taxon>Chlorobiales</taxon>
        <taxon>Chlorobiaceae</taxon>
        <taxon>Chlorobaculum</taxon>
    </lineage>
</organism>
<proteinExistence type="inferred from homology"/>
<sequence>MSKKQGKPEYVTAISNRKARFEYEILDTIEAGIELLGSEVKSVRLGKASLSESYAMIHHGQVWLENMQITPYEHNTLDTLEPKRSRRLLLHKAEIMRLQSKISEKGLTLIPLKAYFNKRGVLKIELGLARGKKLYDKRETIKNRDAKRQLQQLRKQY</sequence>
<evidence type="ECO:0000255" key="1">
    <source>
        <dbReference type="HAMAP-Rule" id="MF_00023"/>
    </source>
</evidence>
<reference key="1">
    <citation type="journal article" date="2002" name="Proc. Natl. Acad. Sci. U.S.A.">
        <title>The complete genome sequence of Chlorobium tepidum TLS, a photosynthetic, anaerobic, green-sulfur bacterium.</title>
        <authorList>
            <person name="Eisen J.A."/>
            <person name="Nelson K.E."/>
            <person name="Paulsen I.T."/>
            <person name="Heidelberg J.F."/>
            <person name="Wu M."/>
            <person name="Dodson R.J."/>
            <person name="DeBoy R.T."/>
            <person name="Gwinn M.L."/>
            <person name="Nelson W.C."/>
            <person name="Haft D.H."/>
            <person name="Hickey E.K."/>
            <person name="Peterson J.D."/>
            <person name="Durkin A.S."/>
            <person name="Kolonay J.F."/>
            <person name="Yang F."/>
            <person name="Holt I.E."/>
            <person name="Umayam L.A."/>
            <person name="Mason T.M."/>
            <person name="Brenner M."/>
            <person name="Shea T.P."/>
            <person name="Parksey D.S."/>
            <person name="Nierman W.C."/>
            <person name="Feldblyum T.V."/>
            <person name="Hansen C.L."/>
            <person name="Craven M.B."/>
            <person name="Radune D."/>
            <person name="Vamathevan J.J."/>
            <person name="Khouri H.M."/>
            <person name="White O."/>
            <person name="Gruber T.M."/>
            <person name="Ketchum K.A."/>
            <person name="Venter J.C."/>
            <person name="Tettelin H."/>
            <person name="Bryant D.A."/>
            <person name="Fraser C.M."/>
        </authorList>
    </citation>
    <scope>NUCLEOTIDE SEQUENCE [LARGE SCALE GENOMIC DNA]</scope>
    <source>
        <strain>ATCC 49652 / DSM 12025 / NBRC 103806 / TLS</strain>
    </source>
</reference>
<accession>Q8KEW8</accession>
<protein>
    <recommendedName>
        <fullName evidence="1">SsrA-binding protein</fullName>
    </recommendedName>
    <alternativeName>
        <fullName evidence="1">Small protein B</fullName>
    </alternativeName>
</protein>
<gene>
    <name evidence="1" type="primary">smpB</name>
    <name type="ordered locus">CT0564</name>
</gene>
<comment type="function">
    <text evidence="1">Required for rescue of stalled ribosomes mediated by trans-translation. Binds to transfer-messenger RNA (tmRNA), required for stable association of tmRNA with ribosomes. tmRNA and SmpB together mimic tRNA shape, replacing the anticodon stem-loop with SmpB. tmRNA is encoded by the ssrA gene; the 2 termini fold to resemble tRNA(Ala) and it encodes a 'tag peptide', a short internal open reading frame. During trans-translation Ala-aminoacylated tmRNA acts like a tRNA, entering the A-site of stalled ribosomes, displacing the stalled mRNA. The ribosome then switches to translate the ORF on the tmRNA; the nascent peptide is terminated with the 'tag peptide' encoded by the tmRNA and targeted for degradation. The ribosome is freed to recommence translation, which seems to be the essential function of trans-translation.</text>
</comment>
<comment type="subcellular location">
    <subcellularLocation>
        <location evidence="1">Cytoplasm</location>
    </subcellularLocation>
    <text evidence="1">The tmRNA-SmpB complex associates with stalled 70S ribosomes.</text>
</comment>
<comment type="similarity">
    <text evidence="1">Belongs to the SmpB family.</text>
</comment>
<keyword id="KW-0963">Cytoplasm</keyword>
<keyword id="KW-1185">Reference proteome</keyword>
<keyword id="KW-0694">RNA-binding</keyword>
<feature type="chain" id="PRO_0000102931" description="SsrA-binding protein">
    <location>
        <begin position="1"/>
        <end position="157"/>
    </location>
</feature>